<reference key="1">
    <citation type="journal article" date="2000" name="DNA Res.">
        <title>Structural analysis of Arabidopsis thaliana chromosome 5. X. Sequence features of the regions of 3,076,755 bp covered by sixty P1 and TAC clones.</title>
        <authorList>
            <person name="Sato S."/>
            <person name="Nakamura Y."/>
            <person name="Kaneko T."/>
            <person name="Katoh T."/>
            <person name="Asamizu E."/>
            <person name="Kotani H."/>
            <person name="Tabata S."/>
        </authorList>
    </citation>
    <scope>NUCLEOTIDE SEQUENCE [LARGE SCALE GENOMIC DNA]</scope>
    <source>
        <strain>cv. Columbia</strain>
    </source>
</reference>
<reference key="2">
    <citation type="journal article" date="2017" name="Plant J.">
        <title>Araport11: a complete reannotation of the Arabidopsis thaliana reference genome.</title>
        <authorList>
            <person name="Cheng C.Y."/>
            <person name="Krishnakumar V."/>
            <person name="Chan A.P."/>
            <person name="Thibaud-Nissen F."/>
            <person name="Schobel S."/>
            <person name="Town C.D."/>
        </authorList>
    </citation>
    <scope>GENOME REANNOTATION</scope>
    <source>
        <strain>cv. Columbia</strain>
    </source>
</reference>
<reference key="3">
    <citation type="submission" date="2006-07" db="EMBL/GenBank/DDBJ databases">
        <title>Large-scale analysis of RIKEN Arabidopsis full-length (RAFL) cDNAs.</title>
        <authorList>
            <person name="Totoki Y."/>
            <person name="Seki M."/>
            <person name="Ishida J."/>
            <person name="Nakajima M."/>
            <person name="Enju A."/>
            <person name="Kamiya A."/>
            <person name="Narusaka M."/>
            <person name="Shin-i T."/>
            <person name="Nakagawa M."/>
            <person name="Sakamoto N."/>
            <person name="Oishi K."/>
            <person name="Kohara Y."/>
            <person name="Kobayashi M."/>
            <person name="Toyoda A."/>
            <person name="Sakaki Y."/>
            <person name="Sakurai T."/>
            <person name="Iida K."/>
            <person name="Akiyama K."/>
            <person name="Satou M."/>
            <person name="Toyoda T."/>
            <person name="Konagaya A."/>
            <person name="Carninci P."/>
            <person name="Kawai J."/>
            <person name="Hayashizaki Y."/>
            <person name="Shinozaki K."/>
        </authorList>
    </citation>
    <scope>NUCLEOTIDE SEQUENCE [LARGE SCALE MRNA]</scope>
    <source>
        <strain>cv. Columbia</strain>
    </source>
</reference>
<name>DRL37_ARATH</name>
<organism>
    <name type="scientific">Arabidopsis thaliana</name>
    <name type="common">Mouse-ear cress</name>
    <dbReference type="NCBI Taxonomy" id="3702"/>
    <lineage>
        <taxon>Eukaryota</taxon>
        <taxon>Viridiplantae</taxon>
        <taxon>Streptophyta</taxon>
        <taxon>Embryophyta</taxon>
        <taxon>Tracheophyta</taxon>
        <taxon>Spermatophyta</taxon>
        <taxon>Magnoliopsida</taxon>
        <taxon>eudicotyledons</taxon>
        <taxon>Gunneridae</taxon>
        <taxon>Pentapetalae</taxon>
        <taxon>rosids</taxon>
        <taxon>malvids</taxon>
        <taxon>Brassicales</taxon>
        <taxon>Brassicaceae</taxon>
        <taxon>Camelineae</taxon>
        <taxon>Arabidopsis</taxon>
    </lineage>
</organism>
<sequence length="843" mass="94801">MNCCWQVVEPCYKSALSYLCVKVGNICMLKENLVLLKSAFDELKAEKEDVVNRVNAGELKGGQRLAIVATWLSQVEIIEENTKQLMDVASARDASSQNASAVRRRLSTSGCWFSTCNLGEKVFKKLTEVKSLSGKDFQEVTEQPPPPVVEVRLCQQTVGLDTTLEKTWESLRKDENRMLGIFGMGGVGKTTLLTLINNKFVEVSDDYDVVIWVESSKDADVGKIQDAIGERLHICDNNWSTYSRGKKASEISRVLRDMKPRFVLLLDDLWEDVSLTAIGIPVLGKKYKVVFTTRSKDVCSVMRANEDIEVQCLSENDAWDLFDMKVHCDGLNEISDIAKKIVAKCCGLPLALEVIRKTMASKSTVIQWRRALDTLESYRSEMKGTEKGIFQVLKLSYDYLKTKNAKCFLYCALFPKAYYIKQDELVEYWIGEGFIDEKDGRERAKDRGYEIIDNLVGAGLLLESNKKVYMHDMIRDMALWIVSEFRDGERYVVKTDAGLSQLPDVTDWTTVTKMSLFNNEIKNIPDDPEFPDQTNLVTLFLQNNRLVDIVGKFFLVMSTLVVLDLSWNFQITELPKGISALVSLRLLNLSGTSIKHLPEGLGVLSKLIHLNLESTSNLRSVGLISELQKLQVLRFYGSAAALDCCLLKILEQLKGLQLLTVTVNNDSVLEEFLGSTRLAGMTQGIYLEGLKVSFAAIGTLSSLHKLEMVNCDITESGTEWEGKRRDQYSPSTSSSEITPSNPWFKDLSAVVINSCIHLKDLTWLMYAANLESLSVESSPKMTELINKEKAQGVGVDPFQELQVLRLHYLKELGSIYGSQVSFPKLKLNKVDIENCPNLHQRPL</sequence>
<keyword id="KW-0067">ATP-binding</keyword>
<keyword id="KW-0175">Coiled coil</keyword>
<keyword id="KW-0433">Leucine-rich repeat</keyword>
<keyword id="KW-0547">Nucleotide-binding</keyword>
<keyword id="KW-0611">Plant defense</keyword>
<keyword id="KW-1185">Reference proteome</keyword>
<keyword id="KW-0677">Repeat</keyword>
<feature type="chain" id="PRO_0000212769" description="Probable disease resistance protein At5g47250">
    <location>
        <begin position="1"/>
        <end position="843"/>
    </location>
</feature>
<feature type="domain" description="NB-ARC">
    <location>
        <begin position="141"/>
        <end position="440"/>
    </location>
</feature>
<feature type="repeat" description="LRR 1">
    <location>
        <begin position="510"/>
        <end position="531"/>
    </location>
</feature>
<feature type="repeat" description="LRR 2">
    <location>
        <begin position="535"/>
        <end position="556"/>
    </location>
</feature>
<feature type="repeat" description="LRR 3">
    <location>
        <begin position="559"/>
        <end position="581"/>
    </location>
</feature>
<feature type="repeat" description="LRR 4">
    <location>
        <begin position="583"/>
        <end position="604"/>
    </location>
</feature>
<feature type="repeat" description="LRR 5">
    <location>
        <begin position="606"/>
        <end position="628"/>
    </location>
</feature>
<feature type="coiled-coil region" evidence="2">
    <location>
        <begin position="28"/>
        <end position="58"/>
    </location>
</feature>
<feature type="binding site" evidence="2">
    <location>
        <begin position="183"/>
        <end position="190"/>
    </location>
    <ligand>
        <name>ATP</name>
        <dbReference type="ChEBI" id="CHEBI:30616"/>
    </ligand>
</feature>
<dbReference type="EMBL" id="AB018117">
    <property type="protein sequence ID" value="BAA97159.1"/>
    <property type="molecule type" value="Genomic_DNA"/>
</dbReference>
<dbReference type="EMBL" id="CP002688">
    <property type="protein sequence ID" value="AED95491.1"/>
    <property type="molecule type" value="Genomic_DNA"/>
</dbReference>
<dbReference type="EMBL" id="AK226756">
    <property type="protein sequence ID" value="BAE98856.1"/>
    <property type="molecule type" value="mRNA"/>
</dbReference>
<dbReference type="RefSeq" id="NP_199536.1">
    <property type="nucleotide sequence ID" value="NM_124096.4"/>
</dbReference>
<dbReference type="SMR" id="Q9LVT4"/>
<dbReference type="STRING" id="3702.Q9LVT4"/>
<dbReference type="iPTMnet" id="Q9LVT4"/>
<dbReference type="PaxDb" id="3702-AT5G47250.1"/>
<dbReference type="ProteomicsDB" id="224335"/>
<dbReference type="EnsemblPlants" id="AT5G47250.1">
    <property type="protein sequence ID" value="AT5G47250.1"/>
    <property type="gene ID" value="AT5G47250"/>
</dbReference>
<dbReference type="GeneID" id="834772"/>
<dbReference type="Gramene" id="AT5G47250.1">
    <property type="protein sequence ID" value="AT5G47250.1"/>
    <property type="gene ID" value="AT5G47250"/>
</dbReference>
<dbReference type="KEGG" id="ath:AT5G47250"/>
<dbReference type="Araport" id="AT5G47250"/>
<dbReference type="TAIR" id="AT5G47250"/>
<dbReference type="eggNOG" id="KOG4658">
    <property type="taxonomic scope" value="Eukaryota"/>
</dbReference>
<dbReference type="HOGENOM" id="CLU_000427_4_0_1"/>
<dbReference type="InParanoid" id="Q9LVT4"/>
<dbReference type="OMA" id="MRANEDI"/>
<dbReference type="PhylomeDB" id="Q9LVT4"/>
<dbReference type="PRO" id="PR:Q9LVT4"/>
<dbReference type="Proteomes" id="UP000006548">
    <property type="component" value="Chromosome 5"/>
</dbReference>
<dbReference type="ExpressionAtlas" id="Q9LVT4">
    <property type="expression patterns" value="baseline and differential"/>
</dbReference>
<dbReference type="GO" id="GO:0005829">
    <property type="term" value="C:cytosol"/>
    <property type="evidence" value="ECO:0007005"/>
    <property type="project" value="TAIR"/>
</dbReference>
<dbReference type="GO" id="GO:0005739">
    <property type="term" value="C:mitochondrion"/>
    <property type="evidence" value="ECO:0007005"/>
    <property type="project" value="TAIR"/>
</dbReference>
<dbReference type="GO" id="GO:0043531">
    <property type="term" value="F:ADP binding"/>
    <property type="evidence" value="ECO:0007669"/>
    <property type="project" value="InterPro"/>
</dbReference>
<dbReference type="GO" id="GO:0005524">
    <property type="term" value="F:ATP binding"/>
    <property type="evidence" value="ECO:0007669"/>
    <property type="project" value="UniProtKB-KW"/>
</dbReference>
<dbReference type="GO" id="GO:0006952">
    <property type="term" value="P:defense response"/>
    <property type="evidence" value="ECO:0007669"/>
    <property type="project" value="UniProtKB-KW"/>
</dbReference>
<dbReference type="CDD" id="cd00882">
    <property type="entry name" value="Ras_like_GTPase"/>
    <property type="match status" value="1"/>
</dbReference>
<dbReference type="FunFam" id="3.80.10.10:FF:000834">
    <property type="entry name" value="Probable disease resistance protein At1g15890"/>
    <property type="match status" value="1"/>
</dbReference>
<dbReference type="FunFam" id="3.40.50.300:FF:001091">
    <property type="entry name" value="Probable disease resistance protein At1g61300"/>
    <property type="match status" value="1"/>
</dbReference>
<dbReference type="FunFam" id="1.10.10.10:FF:000322">
    <property type="entry name" value="Probable disease resistance protein At1g63360"/>
    <property type="match status" value="1"/>
</dbReference>
<dbReference type="FunFam" id="1.10.8.430:FF:000003">
    <property type="entry name" value="Probable disease resistance protein At5g66910"/>
    <property type="match status" value="1"/>
</dbReference>
<dbReference type="Gene3D" id="1.10.8.430">
    <property type="entry name" value="Helical domain of apoptotic protease-activating factors"/>
    <property type="match status" value="1"/>
</dbReference>
<dbReference type="Gene3D" id="3.40.50.300">
    <property type="entry name" value="P-loop containing nucleotide triphosphate hydrolases"/>
    <property type="match status" value="1"/>
</dbReference>
<dbReference type="Gene3D" id="3.80.10.10">
    <property type="entry name" value="Ribonuclease Inhibitor"/>
    <property type="match status" value="1"/>
</dbReference>
<dbReference type="InterPro" id="IPR042197">
    <property type="entry name" value="Apaf_helical"/>
</dbReference>
<dbReference type="InterPro" id="IPR001611">
    <property type="entry name" value="Leu-rich_rpt"/>
</dbReference>
<dbReference type="InterPro" id="IPR032675">
    <property type="entry name" value="LRR_dom_sf"/>
</dbReference>
<dbReference type="InterPro" id="IPR055414">
    <property type="entry name" value="LRR_R13L4/SHOC2-like"/>
</dbReference>
<dbReference type="InterPro" id="IPR002182">
    <property type="entry name" value="NB-ARC"/>
</dbReference>
<dbReference type="InterPro" id="IPR027417">
    <property type="entry name" value="P-loop_NTPase"/>
</dbReference>
<dbReference type="InterPro" id="IPR050905">
    <property type="entry name" value="Plant_NBS-LRR"/>
</dbReference>
<dbReference type="PANTHER" id="PTHR33463:SF220">
    <property type="entry name" value="NB-ARC DOMAIN-CONTAINING PROTEIN"/>
    <property type="match status" value="1"/>
</dbReference>
<dbReference type="PANTHER" id="PTHR33463">
    <property type="entry name" value="NB-ARC DOMAIN-CONTAINING PROTEIN-RELATED"/>
    <property type="match status" value="1"/>
</dbReference>
<dbReference type="Pfam" id="PF23598">
    <property type="entry name" value="LRR_14"/>
    <property type="match status" value="1"/>
</dbReference>
<dbReference type="Pfam" id="PF00931">
    <property type="entry name" value="NB-ARC"/>
    <property type="match status" value="1"/>
</dbReference>
<dbReference type="Pfam" id="PF23559">
    <property type="entry name" value="WH_DRP"/>
    <property type="match status" value="1"/>
</dbReference>
<dbReference type="PRINTS" id="PR00364">
    <property type="entry name" value="DISEASERSIST"/>
</dbReference>
<dbReference type="SUPFAM" id="SSF52058">
    <property type="entry name" value="L domain-like"/>
    <property type="match status" value="1"/>
</dbReference>
<dbReference type="SUPFAM" id="SSF52540">
    <property type="entry name" value="P-loop containing nucleoside triphosphate hydrolases"/>
    <property type="match status" value="1"/>
</dbReference>
<dbReference type="PROSITE" id="PS51450">
    <property type="entry name" value="LRR"/>
    <property type="match status" value="5"/>
</dbReference>
<protein>
    <recommendedName>
        <fullName>Probable disease resistance protein At5g47250</fullName>
    </recommendedName>
</protein>
<accession>Q9LVT4</accession>
<accession>Q0WVJ2</accession>
<evidence type="ECO:0000250" key="1"/>
<evidence type="ECO:0000255" key="2"/>
<evidence type="ECO:0000305" key="3"/>
<proteinExistence type="evidence at transcript level"/>
<comment type="function">
    <text evidence="1">Probable disease resistance protein.</text>
</comment>
<comment type="domain">
    <text evidence="1">The LRR repeats probably act as specificity determinant of pathogen recognition.</text>
</comment>
<comment type="similarity">
    <text evidence="3">Belongs to the disease resistance NB-LRR family.</text>
</comment>
<comment type="online information" name="NIB-LRRS">
    <link uri="http://niblrrs.ucdavis.edu"/>
    <text>Functional and comparative genomics of disease resistance gene homologs</text>
</comment>
<gene>
    <name type="ordered locus">At5g47250</name>
    <name type="ORF">MQL5.11</name>
</gene>